<reference key="1">
    <citation type="journal article" date="1999" name="Nature">
        <title>Sequence and analysis of chromosome 2 of the plant Arabidopsis thaliana.</title>
        <authorList>
            <person name="Lin X."/>
            <person name="Kaul S."/>
            <person name="Rounsley S.D."/>
            <person name="Shea T.P."/>
            <person name="Benito M.-I."/>
            <person name="Town C.D."/>
            <person name="Fujii C.Y."/>
            <person name="Mason T.M."/>
            <person name="Bowman C.L."/>
            <person name="Barnstead M.E."/>
            <person name="Feldblyum T.V."/>
            <person name="Buell C.R."/>
            <person name="Ketchum K.A."/>
            <person name="Lee J.J."/>
            <person name="Ronning C.M."/>
            <person name="Koo H.L."/>
            <person name="Moffat K.S."/>
            <person name="Cronin L.A."/>
            <person name="Shen M."/>
            <person name="Pai G."/>
            <person name="Van Aken S."/>
            <person name="Umayam L."/>
            <person name="Tallon L.J."/>
            <person name="Gill J.E."/>
            <person name="Adams M.D."/>
            <person name="Carrera A.J."/>
            <person name="Creasy T.H."/>
            <person name="Goodman H.M."/>
            <person name="Somerville C.R."/>
            <person name="Copenhaver G.P."/>
            <person name="Preuss D."/>
            <person name="Nierman W.C."/>
            <person name="White O."/>
            <person name="Eisen J.A."/>
            <person name="Salzberg S.L."/>
            <person name="Fraser C.M."/>
            <person name="Venter J.C."/>
        </authorList>
    </citation>
    <scope>NUCLEOTIDE SEQUENCE [LARGE SCALE GENOMIC DNA]</scope>
    <source>
        <strain>cv. Columbia</strain>
    </source>
</reference>
<reference key="2">
    <citation type="journal article" date="2017" name="Plant J.">
        <title>Araport11: a complete reannotation of the Arabidopsis thaliana reference genome.</title>
        <authorList>
            <person name="Cheng C.Y."/>
            <person name="Krishnakumar V."/>
            <person name="Chan A.P."/>
            <person name="Thibaud-Nissen F."/>
            <person name="Schobel S."/>
            <person name="Town C.D."/>
        </authorList>
    </citation>
    <scope>GENOME REANNOTATION</scope>
    <source>
        <strain>cv. Columbia</strain>
    </source>
</reference>
<reference key="3">
    <citation type="journal article" date="2003" name="Science">
        <title>Empirical analysis of transcriptional activity in the Arabidopsis genome.</title>
        <authorList>
            <person name="Yamada K."/>
            <person name="Lim J."/>
            <person name="Dale J.M."/>
            <person name="Chen H."/>
            <person name="Shinn P."/>
            <person name="Palm C.J."/>
            <person name="Southwick A.M."/>
            <person name="Wu H.C."/>
            <person name="Kim C.J."/>
            <person name="Nguyen M."/>
            <person name="Pham P.K."/>
            <person name="Cheuk R.F."/>
            <person name="Karlin-Newmann G."/>
            <person name="Liu S.X."/>
            <person name="Lam B."/>
            <person name="Sakano H."/>
            <person name="Wu T."/>
            <person name="Yu G."/>
            <person name="Miranda M."/>
            <person name="Quach H.L."/>
            <person name="Tripp M."/>
            <person name="Chang C.H."/>
            <person name="Lee J.M."/>
            <person name="Toriumi M.J."/>
            <person name="Chan M.M."/>
            <person name="Tang C.C."/>
            <person name="Onodera C.S."/>
            <person name="Deng J.M."/>
            <person name="Akiyama K."/>
            <person name="Ansari Y."/>
            <person name="Arakawa T."/>
            <person name="Banh J."/>
            <person name="Banno F."/>
            <person name="Bowser L."/>
            <person name="Brooks S.Y."/>
            <person name="Carninci P."/>
            <person name="Chao Q."/>
            <person name="Choy N."/>
            <person name="Enju A."/>
            <person name="Goldsmith A.D."/>
            <person name="Gurjal M."/>
            <person name="Hansen N.F."/>
            <person name="Hayashizaki Y."/>
            <person name="Johnson-Hopson C."/>
            <person name="Hsuan V.W."/>
            <person name="Iida K."/>
            <person name="Karnes M."/>
            <person name="Khan S."/>
            <person name="Koesema E."/>
            <person name="Ishida J."/>
            <person name="Jiang P.X."/>
            <person name="Jones T."/>
            <person name="Kawai J."/>
            <person name="Kamiya A."/>
            <person name="Meyers C."/>
            <person name="Nakajima M."/>
            <person name="Narusaka M."/>
            <person name="Seki M."/>
            <person name="Sakurai T."/>
            <person name="Satou M."/>
            <person name="Tamse R."/>
            <person name="Vaysberg M."/>
            <person name="Wallender E.K."/>
            <person name="Wong C."/>
            <person name="Yamamura Y."/>
            <person name="Yuan S."/>
            <person name="Shinozaki K."/>
            <person name="Davis R.W."/>
            <person name="Theologis A."/>
            <person name="Ecker J.R."/>
        </authorList>
    </citation>
    <scope>NUCLEOTIDE SEQUENCE [LARGE SCALE MRNA]</scope>
    <source>
        <strain>cv. Columbia</strain>
    </source>
</reference>
<reference key="4">
    <citation type="submission" date="2002-03" db="EMBL/GenBank/DDBJ databases">
        <title>Full-length cDNA from Arabidopsis thaliana.</title>
        <authorList>
            <person name="Brover V.V."/>
            <person name="Troukhan M.E."/>
            <person name="Alexandrov N.A."/>
            <person name="Lu Y.-P."/>
            <person name="Flavell R.B."/>
            <person name="Feldmann K.A."/>
        </authorList>
    </citation>
    <scope>NUCLEOTIDE SEQUENCE [LARGE SCALE MRNA]</scope>
</reference>
<reference key="5">
    <citation type="journal article" date="2008" name="FEBS J.">
        <title>Signal peptide peptidase and its homologs in Arabidopsis thaliana - plant tissue-specific expression and distinct subcellular localization.</title>
        <authorList>
            <person name="Tamura T."/>
            <person name="Asakura T."/>
            <person name="Uemura T."/>
            <person name="Ueda T."/>
            <person name="Terauchi K."/>
            <person name="Misaka T."/>
            <person name="Abe K."/>
        </authorList>
    </citation>
    <scope>GENE FAMILY</scope>
    <scope>NOMENCLATURE</scope>
    <scope>TISSUE SPECIFICITY</scope>
    <scope>DEVELOPMENTAL STAGE</scope>
    <scope>SUBCELLULAR LOCATION</scope>
</reference>
<reference key="6">
    <citation type="journal article" date="2009" name="Plant Physiol.">
        <title>The signal peptide peptidase is required for pollen function in Arabidopsis.</title>
        <authorList>
            <person name="Han S."/>
            <person name="Green L."/>
            <person name="Schnell D.J."/>
        </authorList>
    </citation>
    <scope>FUNCTION</scope>
    <scope>DISRUPTION PHENOTYPE</scope>
    <scope>TISSUE SPECIFICITY</scope>
    <scope>SUBCELLULAR LOCATION</scope>
</reference>
<feature type="chain" id="PRO_0000419092" description="Signal peptide peptidase">
    <location>
        <begin position="1"/>
        <end position="344"/>
    </location>
</feature>
<feature type="topological domain" description="Lumenal" evidence="2">
    <location>
        <begin position="1"/>
        <end position="11"/>
    </location>
</feature>
<feature type="transmembrane region" description="Helical" evidence="2">
    <location>
        <begin position="12"/>
        <end position="32"/>
    </location>
</feature>
<feature type="topological domain" description="Cytoplasmic" evidence="2">
    <location>
        <begin position="33"/>
        <end position="62"/>
    </location>
</feature>
<feature type="transmembrane region" description="Helical" evidence="2">
    <location>
        <begin position="63"/>
        <end position="83"/>
    </location>
</feature>
<feature type="topological domain" description="Lumenal" evidence="2">
    <location>
        <begin position="84"/>
        <end position="89"/>
    </location>
</feature>
<feature type="transmembrane region" description="Helical" evidence="2">
    <location>
        <begin position="90"/>
        <end position="110"/>
    </location>
</feature>
<feature type="topological domain" description="Cytoplasmic" evidence="2">
    <location>
        <begin position="111"/>
        <end position="136"/>
    </location>
</feature>
<feature type="transmembrane region" description="Helical" evidence="2">
    <location>
        <begin position="137"/>
        <end position="157"/>
    </location>
</feature>
<feature type="topological domain" description="Lumenal" evidence="2">
    <location>
        <begin position="158"/>
        <end position="160"/>
    </location>
</feature>
<feature type="transmembrane region" description="Helical" evidence="2">
    <location>
        <begin position="161"/>
        <end position="181"/>
    </location>
</feature>
<feature type="topological domain" description="Cytoplasmic" evidence="2">
    <location>
        <begin position="182"/>
        <end position="188"/>
    </location>
</feature>
<feature type="transmembrane region" description="Helical" evidence="2">
    <location>
        <begin position="189"/>
        <end position="209"/>
    </location>
</feature>
<feature type="topological domain" description="Lumenal" evidence="2">
    <location>
        <begin position="210"/>
        <end position="230"/>
    </location>
</feature>
<feature type="transmembrane region" description="Helical" evidence="2">
    <location>
        <begin position="231"/>
        <end position="251"/>
    </location>
</feature>
<feature type="topological domain" description="Cytoplasmic" evidence="2">
    <location>
        <begin position="252"/>
        <end position="263"/>
    </location>
</feature>
<feature type="transmembrane region" description="Helical" evidence="2">
    <location>
        <begin position="264"/>
        <end position="284"/>
    </location>
</feature>
<feature type="topological domain" description="Lumenal" evidence="2">
    <location>
        <begin position="285"/>
        <end position="290"/>
    </location>
</feature>
<feature type="transmembrane region" description="Helical" evidence="2">
    <location>
        <begin position="291"/>
        <end position="311"/>
    </location>
</feature>
<feature type="topological domain" description="Cytoplasmic" evidence="2">
    <location>
        <begin position="312"/>
        <end position="344"/>
    </location>
</feature>
<feature type="region of interest" description="Disordered" evidence="3">
    <location>
        <begin position="323"/>
        <end position="344"/>
    </location>
</feature>
<feature type="short sequence motif" description="PAL">
    <location>
        <begin position="290"/>
        <end position="292"/>
    </location>
</feature>
<feature type="active site" evidence="1">
    <location>
        <position position="198"/>
    </location>
</feature>
<feature type="active site" evidence="1">
    <location>
        <position position="239"/>
    </location>
</feature>
<feature type="sequence conflict" description="In Ref. 4; AAM65222." evidence="6" ref="4">
    <original>Y</original>
    <variation>F</variation>
    <location>
        <position position="294"/>
    </location>
</feature>
<gene>
    <name type="primary">SPP</name>
    <name type="ordered locus">At2g03120</name>
    <name type="ORF">T18E12.21</name>
</gene>
<keyword id="KW-0256">Endoplasmic reticulum</keyword>
<keyword id="KW-0378">Hydrolase</keyword>
<keyword id="KW-0472">Membrane</keyword>
<keyword id="KW-0645">Protease</keyword>
<keyword id="KW-1185">Reference proteome</keyword>
<keyword id="KW-0812">Transmembrane</keyword>
<keyword id="KW-1133">Transmembrane helix</keyword>
<name>SIP_ARATH</name>
<sequence>MKNCERFANLALAGLTLAPLVVRVNPNLNVILTACITVYVGCFRSVKDTPPTETMSKEHAMRFPLVGSAMLLSLFLLFKFLSKDLVNAVLTAYFFVLGIVALSATLLPAIRRFLPNPWNDNLIVWRFPYFKSLEVEFTKSQVVAGIPGTFFCAWYAWKKHWLANNILGLSFCIQGIEMLSLGSFKTGAILLAGLFFYDIFWVFFTPVMVSVAKSFDAPIKLLFPTGDALRPYSMLGLGDIVIPGIFVALALRFDVSRRRQPQYFTSAFIGYAVGVILTIVVMNWFQAAQPALLYIVPAVIGFLASHCIWNGDIKPLLAFDESKTEEATTDESKTSEEVNKAHDE</sequence>
<protein>
    <recommendedName>
        <fullName>Signal peptide peptidase</fullName>
        <shortName>AtSPP</shortName>
        <ecNumber>3.4.23.-</ecNumber>
    </recommendedName>
    <alternativeName>
        <fullName>Intramembrane protease</fullName>
        <shortName>IMP</shortName>
        <shortName>IMPAS</shortName>
    </alternativeName>
</protein>
<organism>
    <name type="scientific">Arabidopsis thaliana</name>
    <name type="common">Mouse-ear cress</name>
    <dbReference type="NCBI Taxonomy" id="3702"/>
    <lineage>
        <taxon>Eukaryota</taxon>
        <taxon>Viridiplantae</taxon>
        <taxon>Streptophyta</taxon>
        <taxon>Embryophyta</taxon>
        <taxon>Tracheophyta</taxon>
        <taxon>Spermatophyta</taxon>
        <taxon>Magnoliopsida</taxon>
        <taxon>eudicotyledons</taxon>
        <taxon>Gunneridae</taxon>
        <taxon>Pentapetalae</taxon>
        <taxon>rosids</taxon>
        <taxon>malvids</taxon>
        <taxon>Brassicales</taxon>
        <taxon>Brassicaceae</taxon>
        <taxon>Camelineae</taxon>
        <taxon>Arabidopsis</taxon>
    </lineage>
</organism>
<accession>O81062</accession>
<accession>Q8LAP9</accession>
<proteinExistence type="evidence at transcript level"/>
<dbReference type="EC" id="3.4.23.-"/>
<dbReference type="EMBL" id="AC005313">
    <property type="protein sequence ID" value="AAC34490.1"/>
    <property type="molecule type" value="Genomic_DNA"/>
</dbReference>
<dbReference type="EMBL" id="CP002685">
    <property type="protein sequence ID" value="AEC05665.1"/>
    <property type="molecule type" value="Genomic_DNA"/>
</dbReference>
<dbReference type="EMBL" id="AY065169">
    <property type="protein sequence ID" value="AAL38345.1"/>
    <property type="molecule type" value="mRNA"/>
</dbReference>
<dbReference type="EMBL" id="AY114571">
    <property type="protein sequence ID" value="AAM47890.1"/>
    <property type="molecule type" value="mRNA"/>
</dbReference>
<dbReference type="EMBL" id="AY087685">
    <property type="protein sequence ID" value="AAM65222.1"/>
    <property type="molecule type" value="mRNA"/>
</dbReference>
<dbReference type="PIR" id="T02714">
    <property type="entry name" value="T02714"/>
</dbReference>
<dbReference type="RefSeq" id="NP_565294.1">
    <property type="nucleotide sequence ID" value="NM_126363.7"/>
</dbReference>
<dbReference type="BioGRID" id="243">
    <property type="interactions" value="9"/>
</dbReference>
<dbReference type="FunCoup" id="O81062">
    <property type="interactions" value="4001"/>
</dbReference>
<dbReference type="IntAct" id="O81062">
    <property type="interactions" value="8"/>
</dbReference>
<dbReference type="STRING" id="3702.O81062"/>
<dbReference type="MEROPS" id="A22.A15"/>
<dbReference type="PaxDb" id="3702-AT2G03120.1"/>
<dbReference type="ProteomicsDB" id="234465"/>
<dbReference type="EnsemblPlants" id="AT2G03120.1">
    <property type="protein sequence ID" value="AT2G03120.1"/>
    <property type="gene ID" value="AT2G03120"/>
</dbReference>
<dbReference type="GeneID" id="814841"/>
<dbReference type="Gramene" id="AT2G03120.1">
    <property type="protein sequence ID" value="AT2G03120.1"/>
    <property type="gene ID" value="AT2G03120"/>
</dbReference>
<dbReference type="KEGG" id="ath:AT2G03120"/>
<dbReference type="Araport" id="AT2G03120"/>
<dbReference type="TAIR" id="AT2G03120">
    <property type="gene designation" value="SPP"/>
</dbReference>
<dbReference type="eggNOG" id="KOG2443">
    <property type="taxonomic scope" value="Eukaryota"/>
</dbReference>
<dbReference type="HOGENOM" id="CLU_023799_0_1_1"/>
<dbReference type="InParanoid" id="O81062"/>
<dbReference type="OMA" id="FLYDIWW"/>
<dbReference type="OrthoDB" id="29661at2759"/>
<dbReference type="PhylomeDB" id="O81062"/>
<dbReference type="BRENDA" id="3.4.23.B24">
    <property type="organism ID" value="399"/>
</dbReference>
<dbReference type="CD-CODE" id="4299E36E">
    <property type="entry name" value="Nucleolus"/>
</dbReference>
<dbReference type="PRO" id="PR:O81062"/>
<dbReference type="Proteomes" id="UP000006548">
    <property type="component" value="Chromosome 2"/>
</dbReference>
<dbReference type="ExpressionAtlas" id="O81062">
    <property type="expression patterns" value="baseline and differential"/>
</dbReference>
<dbReference type="GO" id="GO:0005783">
    <property type="term" value="C:endoplasmic reticulum"/>
    <property type="evidence" value="ECO:0000314"/>
    <property type="project" value="TAIR"/>
</dbReference>
<dbReference type="GO" id="GO:0005789">
    <property type="term" value="C:endoplasmic reticulum membrane"/>
    <property type="evidence" value="ECO:0000314"/>
    <property type="project" value="TAIR"/>
</dbReference>
<dbReference type="GO" id="GO:0042500">
    <property type="term" value="F:aspartic endopeptidase activity, intramembrane cleaving"/>
    <property type="evidence" value="ECO:0007669"/>
    <property type="project" value="InterPro"/>
</dbReference>
<dbReference type="GO" id="GO:0009555">
    <property type="term" value="P:pollen development"/>
    <property type="evidence" value="ECO:0000315"/>
    <property type="project" value="TAIR"/>
</dbReference>
<dbReference type="GO" id="GO:0009846">
    <property type="term" value="P:pollen germination"/>
    <property type="evidence" value="ECO:0000315"/>
    <property type="project" value="TAIR"/>
</dbReference>
<dbReference type="GO" id="GO:0006508">
    <property type="term" value="P:proteolysis"/>
    <property type="evidence" value="ECO:0007669"/>
    <property type="project" value="UniProtKB-KW"/>
</dbReference>
<dbReference type="InterPro" id="IPR007369">
    <property type="entry name" value="Peptidase_A22B_SPP"/>
</dbReference>
<dbReference type="InterPro" id="IPR006639">
    <property type="entry name" value="Preselin/SPP"/>
</dbReference>
<dbReference type="PANTHER" id="PTHR12174:SF23">
    <property type="entry name" value="MINOR HISTOCOMPATIBILITY ANTIGEN H13"/>
    <property type="match status" value="1"/>
</dbReference>
<dbReference type="PANTHER" id="PTHR12174">
    <property type="entry name" value="SIGNAL PEPTIDE PEPTIDASE"/>
    <property type="match status" value="1"/>
</dbReference>
<dbReference type="Pfam" id="PF04258">
    <property type="entry name" value="Peptidase_A22B"/>
    <property type="match status" value="1"/>
</dbReference>
<dbReference type="SMART" id="SM00730">
    <property type="entry name" value="PSN"/>
    <property type="match status" value="1"/>
</dbReference>
<evidence type="ECO:0000250" key="1"/>
<evidence type="ECO:0000255" key="2"/>
<evidence type="ECO:0000256" key="3">
    <source>
        <dbReference type="SAM" id="MobiDB-lite"/>
    </source>
</evidence>
<evidence type="ECO:0000269" key="4">
    <source>
    </source>
</evidence>
<evidence type="ECO:0000269" key="5">
    <source>
    </source>
</evidence>
<evidence type="ECO:0000305" key="6"/>
<comment type="function">
    <text evidence="1 5">Intramembrane-cleaving aspartic protease (I-CLiP) that cleaves type II membrane signal peptides in the hydrophobic plane of the membrane (By similarity). Catalyzes intramembrane proteolysis of some signal peptides after they have been cleaved from a preprotein, resulting in the release of the fragment from the ER membrane into the cytoplasm (By similarity). Plays a critical role in the development and function of the reproductive tissues, especially in pollen development.</text>
</comment>
<comment type="subcellular location">
    <subcellularLocation>
        <location evidence="4 5">Endoplasmic reticulum membrane</location>
        <topology evidence="4 5">Multi-pass membrane protein</topology>
    </subcellularLocation>
</comment>
<comment type="tissue specificity">
    <text evidence="4 5">Ubiquitous with the highest expression in emerging leaves, roots, and floral tissues (at the protein level). Highly detected in pollen.</text>
</comment>
<comment type="developmental stage">
    <text evidence="4">Expressed in the shoot meristem and root epidermal cells in germinating seeds. At the reproductive stage, expressed in the whole shoot apex.</text>
</comment>
<comment type="domain">
    <text evidence="1">The first transmembrane domain may act as a type I signal anchor. The PAL motif is required for normal active site conformation.</text>
</comment>
<comment type="disruption phenotype">
    <text evidence="5">Mostly lethal due to a male gametophytic defect.</text>
</comment>
<comment type="similarity">
    <text evidence="6">Belongs to the peptidase A22B family.</text>
</comment>